<evidence type="ECO:0000250" key="1">
    <source>
        <dbReference type="UniProtKB" id="O48814"/>
    </source>
</evidence>
<evidence type="ECO:0000255" key="2"/>
<evidence type="ECO:0000255" key="3">
    <source>
        <dbReference type="PROSITE-ProRule" id="PRU00159"/>
    </source>
</evidence>
<evidence type="ECO:0000255" key="4">
    <source>
        <dbReference type="PROSITE-ProRule" id="PRU10027"/>
    </source>
</evidence>
<evidence type="ECO:0000303" key="5">
    <source>
    </source>
</evidence>
<evidence type="ECO:0000303" key="6">
    <source>
    </source>
</evidence>
<evidence type="ECO:0000305" key="7"/>
<keyword id="KW-0025">Alternative splicing</keyword>
<keyword id="KW-0067">ATP-binding</keyword>
<keyword id="KW-0325">Glycoprotein</keyword>
<keyword id="KW-0418">Kinase</keyword>
<keyword id="KW-0433">Leucine-rich repeat</keyword>
<keyword id="KW-0472">Membrane</keyword>
<keyword id="KW-0547">Nucleotide-binding</keyword>
<keyword id="KW-0597">Phosphoprotein</keyword>
<keyword id="KW-0675">Receptor</keyword>
<keyword id="KW-1185">Reference proteome</keyword>
<keyword id="KW-0677">Repeat</keyword>
<keyword id="KW-0723">Serine/threonine-protein kinase</keyword>
<keyword id="KW-0732">Signal</keyword>
<keyword id="KW-0808">Transferase</keyword>
<keyword id="KW-0812">Transmembrane</keyword>
<keyword id="KW-1133">Transmembrane helix</keyword>
<feature type="signal peptide" evidence="2">
    <location>
        <begin position="1"/>
        <end position="20"/>
    </location>
</feature>
<feature type="chain" id="PRO_0000387530" description="Probable LRR receptor-like serine/threonine-protein kinase At1g51810">
    <location>
        <begin position="21"/>
        <end position="871"/>
    </location>
</feature>
<feature type="topological domain" description="Extracellular" evidence="2">
    <location>
        <begin position="21"/>
        <end position="512"/>
    </location>
</feature>
<feature type="transmembrane region" description="Helical" evidence="2">
    <location>
        <begin position="513"/>
        <end position="533"/>
    </location>
</feature>
<feature type="topological domain" description="Cytoplasmic" evidence="2">
    <location>
        <begin position="534"/>
        <end position="871"/>
    </location>
</feature>
<feature type="repeat" description="LRR 1">
    <location>
        <begin position="405"/>
        <end position="426"/>
    </location>
</feature>
<feature type="repeat" description="LRR 2">
    <location>
        <begin position="429"/>
        <end position="449"/>
    </location>
</feature>
<feature type="repeat" description="LRR 3">
    <location>
        <begin position="453"/>
        <end position="474"/>
    </location>
</feature>
<feature type="domain" description="Protein kinase" evidence="3">
    <location>
        <begin position="577"/>
        <end position="850"/>
    </location>
</feature>
<feature type="active site" description="Proton acceptor" evidence="3 4">
    <location>
        <position position="702"/>
    </location>
</feature>
<feature type="binding site" evidence="3">
    <location>
        <begin position="583"/>
        <end position="591"/>
    </location>
    <ligand>
        <name>ATP</name>
        <dbReference type="ChEBI" id="CHEBI:30616"/>
    </ligand>
</feature>
<feature type="binding site" evidence="3">
    <location>
        <position position="605"/>
    </location>
    <ligand>
        <name>ATP</name>
        <dbReference type="ChEBI" id="CHEBI:30616"/>
    </ligand>
</feature>
<feature type="modified residue" description="Phosphothreonine" evidence="1">
    <location>
        <position position="568"/>
    </location>
</feature>
<feature type="modified residue" description="Phosphotyrosine" evidence="1">
    <location>
        <position position="650"/>
    </location>
</feature>
<feature type="modified residue" description="Phosphoserine" evidence="1">
    <location>
        <position position="736"/>
    </location>
</feature>
<feature type="modified residue" description="Phosphothreonine" evidence="1">
    <location>
        <position position="737"/>
    </location>
</feature>
<feature type="modified residue" description="Phosphothreonine" evidence="1">
    <location>
        <position position="742"/>
    </location>
</feature>
<feature type="modified residue" description="Phosphotyrosine" evidence="1">
    <location>
        <position position="750"/>
    </location>
</feature>
<feature type="glycosylation site" description="N-linked (GlcNAc...) asparagine" evidence="2">
    <location>
        <position position="93"/>
    </location>
</feature>
<feature type="glycosylation site" description="N-linked (GlcNAc...) asparagine" evidence="2">
    <location>
        <position position="179"/>
    </location>
</feature>
<feature type="glycosylation site" description="N-linked (GlcNAc...) asparagine" evidence="2">
    <location>
        <position position="229"/>
    </location>
</feature>
<feature type="glycosylation site" description="N-linked (GlcNAc...) asparagine" evidence="2">
    <location>
        <position position="283"/>
    </location>
</feature>
<feature type="glycosylation site" description="N-linked (GlcNAc...) asparagine" evidence="2">
    <location>
        <position position="295"/>
    </location>
</feature>
<feature type="glycosylation site" description="N-linked (GlcNAc...) asparagine" evidence="2">
    <location>
        <position position="396"/>
    </location>
</feature>
<feature type="glycosylation site" description="N-linked (GlcNAc...) asparagine" evidence="2">
    <location>
        <position position="410"/>
    </location>
</feature>
<feature type="glycosylation site" description="N-linked (GlcNAc...) asparagine" evidence="2">
    <location>
        <position position="439"/>
    </location>
</feature>
<feature type="glycosylation site" description="N-linked (GlcNAc...) asparagine" evidence="2">
    <location>
        <position position="458"/>
    </location>
</feature>
<feature type="glycosylation site" description="N-linked (GlcNAc...) asparagine" evidence="2">
    <location>
        <position position="463"/>
    </location>
</feature>
<feature type="glycosylation site" description="N-linked (GlcNAc...) asparagine" evidence="2">
    <location>
        <position position="489"/>
    </location>
</feature>
<feature type="splice variant" id="VSP_038278" description="In isoform 2." evidence="5 6">
    <location>
        <begin position="1"/>
        <end position="127"/>
    </location>
</feature>
<name>Y5181_ARATH</name>
<organism>
    <name type="scientific">Arabidopsis thaliana</name>
    <name type="common">Mouse-ear cress</name>
    <dbReference type="NCBI Taxonomy" id="3702"/>
    <lineage>
        <taxon>Eukaryota</taxon>
        <taxon>Viridiplantae</taxon>
        <taxon>Streptophyta</taxon>
        <taxon>Embryophyta</taxon>
        <taxon>Tracheophyta</taxon>
        <taxon>Spermatophyta</taxon>
        <taxon>Magnoliopsida</taxon>
        <taxon>eudicotyledons</taxon>
        <taxon>Gunneridae</taxon>
        <taxon>Pentapetalae</taxon>
        <taxon>rosids</taxon>
        <taxon>malvids</taxon>
        <taxon>Brassicales</taxon>
        <taxon>Brassicaceae</taxon>
        <taxon>Camelineae</taxon>
        <taxon>Arabidopsis</taxon>
    </lineage>
</organism>
<proteinExistence type="evidence at protein level"/>
<gene>
    <name type="ordered locus">At1g51810</name>
    <name type="ORF">F19C24.1</name>
    <name type="ORF">T14L22.2</name>
</gene>
<sequence length="871" mass="97230">MERHCLFFVIFSLILHLVQAQDPIGFINLDCGLSIQGSPYKESSTGLTYTSDDGFVQSGKIGKITKELESLYKKPERTLRYFPDGVRNCFSLNVTRGTKYLIKPTFLYGNYDGRNVIPDFDLYIGPNMWITVNTDNTIKEILHVSKSNTLQVCLVKTGTSIPYINTLELRPLADDIYTNESGSLNYLFRVYYSNLKGYIEYPDDVHDRIWKQILPYQDWQILTTNLQINVSNDYDLPQRVMKTAVTPIKASTTTMEFPWNLEPPTSQFYLFLHFAELQSLQANETREFNVVLNGNVTFKSYSPKFLEMQTVYSTAPKQCDGGKCLLQLVKTSRSTLPPLINAMEAYTVLDFPQIETNVDEVIAIKNIQSTYGLSKTTWQGDPCVPKKFLWDGLNCNNSDDSTPPIITSLNLSSSGLTGIIVLTIQNLANLQELDLSNNNLSGGVPEFLADMKSLLVINLSGNNLSGVVPQKLIEKKMLKLNIEGNPKLNCTVESCVNKDEEGGRQIKSMTIPIVASIGSVVAFTVALMIFCVVRKNNPSNDEAPTSCMLPADSRSSEPTIVTKNKKFTYAEVLTMTNNFQKILGKGGFGIVYYGSVNGTEQVAVKMLSHSSAQGYKQFKAEVELLLRVHHKNLVGLVGYCEEGDKLALIYEYMANGDLDEHMSGKRGGSILNWGTRLKIALEAAQGLEYLHNGCKPLMVHRDVKTTNILLNEHFDTKLADFGLSRSFPIEGETHVSTVVAGTIGYLDPEYYRTNWLTEKSDVYSFGVVLLVMITNQPVIDQNREKRHIAEWVGGMLTKGDIKSITDPNLLGDYNSGSVWKAVELAMSCMNPSSMTRPTMSQVVFELKECLASESSREVSMTFGTEVAPMAR</sequence>
<comment type="catalytic activity">
    <reaction>
        <text>L-seryl-[protein] + ATP = O-phospho-L-seryl-[protein] + ADP + H(+)</text>
        <dbReference type="Rhea" id="RHEA:17989"/>
        <dbReference type="Rhea" id="RHEA-COMP:9863"/>
        <dbReference type="Rhea" id="RHEA-COMP:11604"/>
        <dbReference type="ChEBI" id="CHEBI:15378"/>
        <dbReference type="ChEBI" id="CHEBI:29999"/>
        <dbReference type="ChEBI" id="CHEBI:30616"/>
        <dbReference type="ChEBI" id="CHEBI:83421"/>
        <dbReference type="ChEBI" id="CHEBI:456216"/>
        <dbReference type="EC" id="2.7.11.1"/>
    </reaction>
</comment>
<comment type="catalytic activity">
    <reaction>
        <text>L-threonyl-[protein] + ATP = O-phospho-L-threonyl-[protein] + ADP + H(+)</text>
        <dbReference type="Rhea" id="RHEA:46608"/>
        <dbReference type="Rhea" id="RHEA-COMP:11060"/>
        <dbReference type="Rhea" id="RHEA-COMP:11605"/>
        <dbReference type="ChEBI" id="CHEBI:15378"/>
        <dbReference type="ChEBI" id="CHEBI:30013"/>
        <dbReference type="ChEBI" id="CHEBI:30616"/>
        <dbReference type="ChEBI" id="CHEBI:61977"/>
        <dbReference type="ChEBI" id="CHEBI:456216"/>
        <dbReference type="EC" id="2.7.11.1"/>
    </reaction>
</comment>
<comment type="interaction">
    <interactant intactId="EBI-20653376">
        <id>Q9FZB8-2</id>
    </interactant>
    <interactant intactId="EBI-17121474">
        <id>Q93ZS4</id>
        <label>NIK3</label>
    </interactant>
    <organismsDiffer>false</organismsDiffer>
    <experiments>2</experiments>
</comment>
<comment type="interaction">
    <interactant intactId="EBI-20653376">
        <id>Q9FZB8-2</id>
    </interactant>
    <interactant intactId="EBI-1238200">
        <id>Q9LZV7</id>
        <label>PXC2</label>
    </interactant>
    <organismsDiffer>false</organismsDiffer>
    <experiments>2</experiments>
</comment>
<comment type="interaction">
    <interactant intactId="EBI-20653376">
        <id>Q9FZB8-2</id>
    </interactant>
    <interactant intactId="EBI-20652836">
        <id>Q9FYK0</id>
        <label>TMK2</label>
    </interactant>
    <organismsDiffer>false</organismsDiffer>
    <experiments>2</experiments>
</comment>
<comment type="subcellular location">
    <subcellularLocation>
        <location evidence="7">Membrane</location>
        <topology evidence="7">Single-pass type I membrane protein</topology>
    </subcellularLocation>
</comment>
<comment type="alternative products">
    <event type="alternative splicing"/>
    <isoform>
        <id>Q9FZB8-1</id>
        <name>1</name>
        <sequence type="displayed"/>
    </isoform>
    <isoform>
        <id>Q9FZB8-2</id>
        <name>2</name>
        <sequence type="described" ref="VSP_038278"/>
    </isoform>
</comment>
<comment type="similarity">
    <text evidence="3">Belongs to the protein kinase superfamily. Ser/Thr protein kinase family.</text>
</comment>
<accession>Q9FZB8</accession>
<accession>Q9C8I8</accession>
<protein>
    <recommendedName>
        <fullName>Probable LRR receptor-like serine/threonine-protein kinase At1g51810</fullName>
        <ecNumber>2.7.11.1</ecNumber>
    </recommendedName>
</protein>
<reference key="1">
    <citation type="journal article" date="2000" name="Nature">
        <title>Sequence and analysis of chromosome 1 of the plant Arabidopsis thaliana.</title>
        <authorList>
            <person name="Theologis A."/>
            <person name="Ecker J.R."/>
            <person name="Palm C.J."/>
            <person name="Federspiel N.A."/>
            <person name="Kaul S."/>
            <person name="White O."/>
            <person name="Alonso J."/>
            <person name="Altafi H."/>
            <person name="Araujo R."/>
            <person name="Bowman C.L."/>
            <person name="Brooks S.Y."/>
            <person name="Buehler E."/>
            <person name="Chan A."/>
            <person name="Chao Q."/>
            <person name="Chen H."/>
            <person name="Cheuk R.F."/>
            <person name="Chin C.W."/>
            <person name="Chung M.K."/>
            <person name="Conn L."/>
            <person name="Conway A.B."/>
            <person name="Conway A.R."/>
            <person name="Creasy T.H."/>
            <person name="Dewar K."/>
            <person name="Dunn P."/>
            <person name="Etgu P."/>
            <person name="Feldblyum T.V."/>
            <person name="Feng J.-D."/>
            <person name="Fong B."/>
            <person name="Fujii C.Y."/>
            <person name="Gill J.E."/>
            <person name="Goldsmith A.D."/>
            <person name="Haas B."/>
            <person name="Hansen N.F."/>
            <person name="Hughes B."/>
            <person name="Huizar L."/>
            <person name="Hunter J.L."/>
            <person name="Jenkins J."/>
            <person name="Johnson-Hopson C."/>
            <person name="Khan S."/>
            <person name="Khaykin E."/>
            <person name="Kim C.J."/>
            <person name="Koo H.L."/>
            <person name="Kremenetskaia I."/>
            <person name="Kurtz D.B."/>
            <person name="Kwan A."/>
            <person name="Lam B."/>
            <person name="Langin-Hooper S."/>
            <person name="Lee A."/>
            <person name="Lee J.M."/>
            <person name="Lenz C.A."/>
            <person name="Li J.H."/>
            <person name="Li Y.-P."/>
            <person name="Lin X."/>
            <person name="Liu S.X."/>
            <person name="Liu Z.A."/>
            <person name="Luros J.S."/>
            <person name="Maiti R."/>
            <person name="Marziali A."/>
            <person name="Militscher J."/>
            <person name="Miranda M."/>
            <person name="Nguyen M."/>
            <person name="Nierman W.C."/>
            <person name="Osborne B.I."/>
            <person name="Pai G."/>
            <person name="Peterson J."/>
            <person name="Pham P.K."/>
            <person name="Rizzo M."/>
            <person name="Rooney T."/>
            <person name="Rowley D."/>
            <person name="Sakano H."/>
            <person name="Salzberg S.L."/>
            <person name="Schwartz J.R."/>
            <person name="Shinn P."/>
            <person name="Southwick A.M."/>
            <person name="Sun H."/>
            <person name="Tallon L.J."/>
            <person name="Tambunga G."/>
            <person name="Toriumi M.J."/>
            <person name="Town C.D."/>
            <person name="Utterback T."/>
            <person name="Van Aken S."/>
            <person name="Vaysberg M."/>
            <person name="Vysotskaia V.S."/>
            <person name="Walker M."/>
            <person name="Wu D."/>
            <person name="Yu G."/>
            <person name="Fraser C.M."/>
            <person name="Venter J.C."/>
            <person name="Davis R.W."/>
        </authorList>
    </citation>
    <scope>NUCLEOTIDE SEQUENCE [LARGE SCALE GENOMIC DNA]</scope>
    <source>
        <strain>cv. Columbia</strain>
    </source>
</reference>
<reference key="2">
    <citation type="journal article" date="2017" name="Plant J.">
        <title>Araport11: a complete reannotation of the Arabidopsis thaliana reference genome.</title>
        <authorList>
            <person name="Cheng C.Y."/>
            <person name="Krishnakumar V."/>
            <person name="Chan A.P."/>
            <person name="Thibaud-Nissen F."/>
            <person name="Schobel S."/>
            <person name="Town C.D."/>
        </authorList>
    </citation>
    <scope>GENOME REANNOTATION</scope>
    <source>
        <strain>cv. Columbia</strain>
    </source>
</reference>
<reference key="3">
    <citation type="journal article" date="2006" name="Plant Biotechnol. J.">
        <title>Simultaneous high-throughput recombinational cloning of open reading frames in closed and open configurations.</title>
        <authorList>
            <person name="Underwood B.A."/>
            <person name="Vanderhaeghen R."/>
            <person name="Whitford R."/>
            <person name="Town C.D."/>
            <person name="Hilson P."/>
        </authorList>
    </citation>
    <scope>NUCLEOTIDE SEQUENCE [LARGE SCALE MRNA] (ISOFORM 2)</scope>
    <source>
        <strain>cv. Columbia</strain>
    </source>
</reference>
<reference key="4">
    <citation type="journal article" date="2010" name="BMC Genomics">
        <title>Genome-wide cloning and sequence analysis of leucine-rich repeat receptor-like protein kinase genes in Arabidopsis thaliana.</title>
        <authorList>
            <person name="Gou X."/>
            <person name="He K."/>
            <person name="Yang H."/>
            <person name="Yuan T."/>
            <person name="Lin H."/>
            <person name="Clouse S.D."/>
            <person name="Li J."/>
        </authorList>
    </citation>
    <scope>NUCLEOTIDE SEQUENCE [LARGE SCALE MRNA] (ISOFORM 2)</scope>
    <source>
        <strain>cv. Columbia</strain>
    </source>
</reference>
<dbReference type="EC" id="2.7.11.1"/>
<dbReference type="EMBL" id="AC015448">
    <property type="protein sequence ID" value="AAF99852.1"/>
    <property type="molecule type" value="Genomic_DNA"/>
</dbReference>
<dbReference type="EMBL" id="AC025294">
    <property type="protein sequence ID" value="AAG50867.1"/>
    <property type="molecule type" value="Genomic_DNA"/>
</dbReference>
<dbReference type="EMBL" id="CP002684">
    <property type="protein sequence ID" value="AEE32720.1"/>
    <property type="molecule type" value="Genomic_DNA"/>
</dbReference>
<dbReference type="EMBL" id="DQ459169">
    <property type="protein sequence ID" value="ABE97168.1"/>
    <property type="molecule type" value="mRNA"/>
</dbReference>
<dbReference type="EMBL" id="FJ708651">
    <property type="protein sequence ID" value="ACN59247.1"/>
    <property type="molecule type" value="mRNA"/>
</dbReference>
<dbReference type="PIR" id="D96557">
    <property type="entry name" value="D96557"/>
</dbReference>
<dbReference type="RefSeq" id="NP_175593.2">
    <molecule id="Q9FZB8-2"/>
    <property type="nucleotide sequence ID" value="NM_104061.3"/>
</dbReference>
<dbReference type="SMR" id="Q9FZB8"/>
<dbReference type="BioGRID" id="26833">
    <property type="interactions" value="22"/>
</dbReference>
<dbReference type="IntAct" id="Q9FZB8">
    <property type="interactions" value="25"/>
</dbReference>
<dbReference type="STRING" id="3702.Q9FZB8"/>
<dbReference type="GlyGen" id="Q9FZB8">
    <property type="glycosylation" value="11 sites"/>
</dbReference>
<dbReference type="PaxDb" id="3702-AT1G51810.1"/>
<dbReference type="PeptideAtlas" id="Q9FZB8"/>
<dbReference type="ProteomicsDB" id="243011">
    <molecule id="Q9FZB8-1"/>
</dbReference>
<dbReference type="EnsemblPlants" id="AT1G51810.1">
    <molecule id="Q9FZB8-2"/>
    <property type="protein sequence ID" value="AT1G51810.1"/>
    <property type="gene ID" value="AT1G51810"/>
</dbReference>
<dbReference type="GeneID" id="841608"/>
<dbReference type="Gramene" id="AT1G51810.1">
    <molecule id="Q9FZB8-2"/>
    <property type="protein sequence ID" value="AT1G51810.1"/>
    <property type="gene ID" value="AT1G51810"/>
</dbReference>
<dbReference type="KEGG" id="ath:AT1G51810"/>
<dbReference type="Araport" id="AT1G51810"/>
<dbReference type="TAIR" id="AT1G51810"/>
<dbReference type="eggNOG" id="ENOG502QQCZ">
    <property type="taxonomic scope" value="Eukaryota"/>
</dbReference>
<dbReference type="HOGENOM" id="CLU_000288_41_1_1"/>
<dbReference type="InParanoid" id="Q9FZB8"/>
<dbReference type="OMA" id="PNIGYNT"/>
<dbReference type="PhylomeDB" id="Q9FZB8"/>
<dbReference type="PRO" id="PR:Q9FZB8"/>
<dbReference type="Proteomes" id="UP000006548">
    <property type="component" value="Chromosome 1"/>
</dbReference>
<dbReference type="ExpressionAtlas" id="Q9FZB8">
    <property type="expression patterns" value="baseline and differential"/>
</dbReference>
<dbReference type="GO" id="GO:0016020">
    <property type="term" value="C:membrane"/>
    <property type="evidence" value="ECO:0007669"/>
    <property type="project" value="UniProtKB-SubCell"/>
</dbReference>
<dbReference type="GO" id="GO:0005524">
    <property type="term" value="F:ATP binding"/>
    <property type="evidence" value="ECO:0007669"/>
    <property type="project" value="UniProtKB-KW"/>
</dbReference>
<dbReference type="GO" id="GO:0106310">
    <property type="term" value="F:protein serine kinase activity"/>
    <property type="evidence" value="ECO:0007669"/>
    <property type="project" value="RHEA"/>
</dbReference>
<dbReference type="GO" id="GO:0004674">
    <property type="term" value="F:protein serine/threonine kinase activity"/>
    <property type="evidence" value="ECO:0007669"/>
    <property type="project" value="UniProtKB-KW"/>
</dbReference>
<dbReference type="CDD" id="cd14066">
    <property type="entry name" value="STKc_IRAK"/>
    <property type="match status" value="1"/>
</dbReference>
<dbReference type="FunFam" id="3.80.10.10:FF:000129">
    <property type="entry name" value="Leucine-rich repeat receptor-like kinase"/>
    <property type="match status" value="1"/>
</dbReference>
<dbReference type="FunFam" id="3.30.200.20:FF:000394">
    <property type="entry name" value="Leucine-rich repeat receptor-like protein kinase"/>
    <property type="match status" value="1"/>
</dbReference>
<dbReference type="FunFam" id="1.10.510.10:FF:000146">
    <property type="entry name" value="LRR receptor-like serine/threonine-protein kinase IOS1"/>
    <property type="match status" value="1"/>
</dbReference>
<dbReference type="Gene3D" id="3.30.200.20">
    <property type="entry name" value="Phosphorylase Kinase, domain 1"/>
    <property type="match status" value="1"/>
</dbReference>
<dbReference type="Gene3D" id="3.80.10.10">
    <property type="entry name" value="Ribonuclease Inhibitor"/>
    <property type="match status" value="1"/>
</dbReference>
<dbReference type="Gene3D" id="1.10.510.10">
    <property type="entry name" value="Transferase(Phosphotransferase) domain 1"/>
    <property type="match status" value="1"/>
</dbReference>
<dbReference type="InterPro" id="IPR011009">
    <property type="entry name" value="Kinase-like_dom_sf"/>
</dbReference>
<dbReference type="InterPro" id="IPR001611">
    <property type="entry name" value="Leu-rich_rpt"/>
</dbReference>
<dbReference type="InterPro" id="IPR032675">
    <property type="entry name" value="LRR_dom_sf"/>
</dbReference>
<dbReference type="InterPro" id="IPR024788">
    <property type="entry name" value="Malectin-like_Carb-bd_dom"/>
</dbReference>
<dbReference type="InterPro" id="IPR000719">
    <property type="entry name" value="Prot_kinase_dom"/>
</dbReference>
<dbReference type="InterPro" id="IPR017441">
    <property type="entry name" value="Protein_kinase_ATP_BS"/>
</dbReference>
<dbReference type="InterPro" id="IPR008271">
    <property type="entry name" value="Ser/Thr_kinase_AS"/>
</dbReference>
<dbReference type="PANTHER" id="PTHR45631:SF86">
    <property type="entry name" value="LEUCINE-RICH REPEAT PROTEIN KINASE FAMILY PROTEIN"/>
    <property type="match status" value="1"/>
</dbReference>
<dbReference type="PANTHER" id="PTHR45631">
    <property type="entry name" value="OS07G0107800 PROTEIN-RELATED"/>
    <property type="match status" value="1"/>
</dbReference>
<dbReference type="Pfam" id="PF13855">
    <property type="entry name" value="LRR_8"/>
    <property type="match status" value="1"/>
</dbReference>
<dbReference type="Pfam" id="PF12819">
    <property type="entry name" value="Malectin_like"/>
    <property type="match status" value="1"/>
</dbReference>
<dbReference type="Pfam" id="PF00069">
    <property type="entry name" value="Pkinase"/>
    <property type="match status" value="1"/>
</dbReference>
<dbReference type="SMART" id="SM00220">
    <property type="entry name" value="S_TKc"/>
    <property type="match status" value="1"/>
</dbReference>
<dbReference type="SUPFAM" id="SSF52058">
    <property type="entry name" value="L domain-like"/>
    <property type="match status" value="1"/>
</dbReference>
<dbReference type="SUPFAM" id="SSF56112">
    <property type="entry name" value="Protein kinase-like (PK-like)"/>
    <property type="match status" value="1"/>
</dbReference>
<dbReference type="PROSITE" id="PS00107">
    <property type="entry name" value="PROTEIN_KINASE_ATP"/>
    <property type="match status" value="1"/>
</dbReference>
<dbReference type="PROSITE" id="PS50011">
    <property type="entry name" value="PROTEIN_KINASE_DOM"/>
    <property type="match status" value="1"/>
</dbReference>
<dbReference type="PROSITE" id="PS00108">
    <property type="entry name" value="PROTEIN_KINASE_ST"/>
    <property type="match status" value="1"/>
</dbReference>